<keyword id="KW-0028">Amino-acid biosynthesis</keyword>
<keyword id="KW-0057">Aromatic amino acid biosynthesis</keyword>
<keyword id="KW-0210">Decarboxylase</keyword>
<keyword id="KW-0456">Lyase</keyword>
<keyword id="KW-0822">Tryptophan biosynthesis</keyword>
<evidence type="ECO:0000255" key="1">
    <source>
        <dbReference type="HAMAP-Rule" id="MF_00134"/>
    </source>
</evidence>
<proteinExistence type="inferred from homology"/>
<sequence>MGTILDKIVDQKKKEVAALYETYTPVKEKRKTRSLVKALEQFTVIAEVKRASPSKGDINLHVDVRKQVKTYEECGAGAVSVLTDGQFFKGSFYDLQTAREESSIPLLCKDFIIDKIQIDRAYEAGADIILLIVAALTKEKLKELYSYVLEKGLEAIVEVHDEQELEIAIQLNPHVIGINNRNLKTFEVDLSQTEKLGKRLNEEKLLWISESGIHSKEDIIRVKRAGAKGVLVGEALMTSSSIHTFFEDCKVNI</sequence>
<gene>
    <name evidence="1" type="primary">trpC</name>
    <name type="ordered locus">BT9727_1139</name>
</gene>
<comment type="catalytic activity">
    <reaction evidence="1">
        <text>1-(2-carboxyphenylamino)-1-deoxy-D-ribulose 5-phosphate + H(+) = (1S,2R)-1-C-(indol-3-yl)glycerol 3-phosphate + CO2 + H2O</text>
        <dbReference type="Rhea" id="RHEA:23476"/>
        <dbReference type="ChEBI" id="CHEBI:15377"/>
        <dbReference type="ChEBI" id="CHEBI:15378"/>
        <dbReference type="ChEBI" id="CHEBI:16526"/>
        <dbReference type="ChEBI" id="CHEBI:58613"/>
        <dbReference type="ChEBI" id="CHEBI:58866"/>
        <dbReference type="EC" id="4.1.1.48"/>
    </reaction>
</comment>
<comment type="pathway">
    <text evidence="1">Amino-acid biosynthesis; L-tryptophan biosynthesis; L-tryptophan from chorismate: step 4/5.</text>
</comment>
<comment type="similarity">
    <text evidence="1">Belongs to the TrpC family.</text>
</comment>
<accession>Q6HLU6</accession>
<organism>
    <name type="scientific">Bacillus thuringiensis subsp. konkukian (strain 97-27)</name>
    <dbReference type="NCBI Taxonomy" id="281309"/>
    <lineage>
        <taxon>Bacteria</taxon>
        <taxon>Bacillati</taxon>
        <taxon>Bacillota</taxon>
        <taxon>Bacilli</taxon>
        <taxon>Bacillales</taxon>
        <taxon>Bacillaceae</taxon>
        <taxon>Bacillus</taxon>
        <taxon>Bacillus cereus group</taxon>
    </lineage>
</organism>
<name>TRPC_BACHK</name>
<reference key="1">
    <citation type="journal article" date="2006" name="J. Bacteriol.">
        <title>Pathogenomic sequence analysis of Bacillus cereus and Bacillus thuringiensis isolates closely related to Bacillus anthracis.</title>
        <authorList>
            <person name="Han C.S."/>
            <person name="Xie G."/>
            <person name="Challacombe J.F."/>
            <person name="Altherr M.R."/>
            <person name="Bhotika S.S."/>
            <person name="Bruce D."/>
            <person name="Campbell C.S."/>
            <person name="Campbell M.L."/>
            <person name="Chen J."/>
            <person name="Chertkov O."/>
            <person name="Cleland C."/>
            <person name="Dimitrijevic M."/>
            <person name="Doggett N.A."/>
            <person name="Fawcett J.J."/>
            <person name="Glavina T."/>
            <person name="Goodwin L.A."/>
            <person name="Hill K.K."/>
            <person name="Hitchcock P."/>
            <person name="Jackson P.J."/>
            <person name="Keim P."/>
            <person name="Kewalramani A.R."/>
            <person name="Longmire J."/>
            <person name="Lucas S."/>
            <person name="Malfatti S."/>
            <person name="McMurry K."/>
            <person name="Meincke L.J."/>
            <person name="Misra M."/>
            <person name="Moseman B.L."/>
            <person name="Mundt M."/>
            <person name="Munk A.C."/>
            <person name="Okinaka R.T."/>
            <person name="Parson-Quintana B."/>
            <person name="Reilly L.P."/>
            <person name="Richardson P."/>
            <person name="Robinson D.L."/>
            <person name="Rubin E."/>
            <person name="Saunders E."/>
            <person name="Tapia R."/>
            <person name="Tesmer J.G."/>
            <person name="Thayer N."/>
            <person name="Thompson L.S."/>
            <person name="Tice H."/>
            <person name="Ticknor L.O."/>
            <person name="Wills P.L."/>
            <person name="Brettin T.S."/>
            <person name="Gilna P."/>
        </authorList>
    </citation>
    <scope>NUCLEOTIDE SEQUENCE [LARGE SCALE GENOMIC DNA]</scope>
    <source>
        <strain>97-27</strain>
    </source>
</reference>
<feature type="chain" id="PRO_1000018439" description="Indole-3-glycerol phosphate synthase">
    <location>
        <begin position="1"/>
        <end position="253"/>
    </location>
</feature>
<dbReference type="EC" id="4.1.1.48" evidence="1"/>
<dbReference type="EMBL" id="AE017355">
    <property type="protein sequence ID" value="AAT59357.1"/>
    <property type="molecule type" value="Genomic_DNA"/>
</dbReference>
<dbReference type="RefSeq" id="WP_000536690.1">
    <property type="nucleotide sequence ID" value="NC_005957.1"/>
</dbReference>
<dbReference type="RefSeq" id="YP_035475.1">
    <property type="nucleotide sequence ID" value="NC_005957.1"/>
</dbReference>
<dbReference type="SMR" id="Q6HLU6"/>
<dbReference type="KEGG" id="btk:BT9727_1139"/>
<dbReference type="PATRIC" id="fig|281309.8.peg.1198"/>
<dbReference type="HOGENOM" id="CLU_034247_2_0_9"/>
<dbReference type="UniPathway" id="UPA00035">
    <property type="reaction ID" value="UER00043"/>
</dbReference>
<dbReference type="Proteomes" id="UP000001301">
    <property type="component" value="Chromosome"/>
</dbReference>
<dbReference type="GO" id="GO:0004425">
    <property type="term" value="F:indole-3-glycerol-phosphate synthase activity"/>
    <property type="evidence" value="ECO:0007669"/>
    <property type="project" value="UniProtKB-UniRule"/>
</dbReference>
<dbReference type="GO" id="GO:0004640">
    <property type="term" value="F:phosphoribosylanthranilate isomerase activity"/>
    <property type="evidence" value="ECO:0007669"/>
    <property type="project" value="TreeGrafter"/>
</dbReference>
<dbReference type="GO" id="GO:0000162">
    <property type="term" value="P:L-tryptophan biosynthetic process"/>
    <property type="evidence" value="ECO:0007669"/>
    <property type="project" value="UniProtKB-UniRule"/>
</dbReference>
<dbReference type="CDD" id="cd00331">
    <property type="entry name" value="IGPS"/>
    <property type="match status" value="1"/>
</dbReference>
<dbReference type="FunFam" id="3.20.20.70:FF:000024">
    <property type="entry name" value="Indole-3-glycerol phosphate synthase"/>
    <property type="match status" value="1"/>
</dbReference>
<dbReference type="Gene3D" id="3.20.20.70">
    <property type="entry name" value="Aldolase class I"/>
    <property type="match status" value="1"/>
</dbReference>
<dbReference type="HAMAP" id="MF_00134_B">
    <property type="entry name" value="IGPS_B"/>
    <property type="match status" value="1"/>
</dbReference>
<dbReference type="InterPro" id="IPR013785">
    <property type="entry name" value="Aldolase_TIM"/>
</dbReference>
<dbReference type="InterPro" id="IPR045186">
    <property type="entry name" value="Indole-3-glycerol_P_synth"/>
</dbReference>
<dbReference type="InterPro" id="IPR013798">
    <property type="entry name" value="Indole-3-glycerol_P_synth_dom"/>
</dbReference>
<dbReference type="InterPro" id="IPR001468">
    <property type="entry name" value="Indole-3-GlycerolPSynthase_CS"/>
</dbReference>
<dbReference type="InterPro" id="IPR011060">
    <property type="entry name" value="RibuloseP-bd_barrel"/>
</dbReference>
<dbReference type="NCBIfam" id="NF001371">
    <property type="entry name" value="PRK00278.1-3"/>
    <property type="match status" value="1"/>
</dbReference>
<dbReference type="NCBIfam" id="NF001377">
    <property type="entry name" value="PRK00278.2-4"/>
    <property type="match status" value="1"/>
</dbReference>
<dbReference type="PANTHER" id="PTHR22854:SF2">
    <property type="entry name" value="INDOLE-3-GLYCEROL-PHOSPHATE SYNTHASE"/>
    <property type="match status" value="1"/>
</dbReference>
<dbReference type="PANTHER" id="PTHR22854">
    <property type="entry name" value="TRYPTOPHAN BIOSYNTHESIS PROTEIN"/>
    <property type="match status" value="1"/>
</dbReference>
<dbReference type="Pfam" id="PF00218">
    <property type="entry name" value="IGPS"/>
    <property type="match status" value="1"/>
</dbReference>
<dbReference type="SUPFAM" id="SSF51366">
    <property type="entry name" value="Ribulose-phoshate binding barrel"/>
    <property type="match status" value="1"/>
</dbReference>
<dbReference type="PROSITE" id="PS00614">
    <property type="entry name" value="IGPS"/>
    <property type="match status" value="1"/>
</dbReference>
<protein>
    <recommendedName>
        <fullName evidence="1">Indole-3-glycerol phosphate synthase</fullName>
        <shortName evidence="1">IGPS</shortName>
        <ecNumber evidence="1">4.1.1.48</ecNumber>
    </recommendedName>
</protein>